<reference key="1">
    <citation type="journal article" date="2006" name="J. Bacteriol.">
        <title>Complete genome sequence of Yersinia pestis strains Antiqua and Nepal516: evidence of gene reduction in an emerging pathogen.</title>
        <authorList>
            <person name="Chain P.S.G."/>
            <person name="Hu P."/>
            <person name="Malfatti S.A."/>
            <person name="Radnedge L."/>
            <person name="Larimer F."/>
            <person name="Vergez L.M."/>
            <person name="Worsham P."/>
            <person name="Chu M.C."/>
            <person name="Andersen G.L."/>
        </authorList>
    </citation>
    <scope>NUCLEOTIDE SEQUENCE [LARGE SCALE GENOMIC DNA]</scope>
    <source>
        <strain>Antiqua</strain>
    </source>
</reference>
<proteinExistence type="inferred from homology"/>
<sequence>MLKKLDSLLTVAGITLPDQQKHQLIGYVELLDKWNKAYNLTSVRDPQQMLVRHILDSIVVNPHLQGSRFIDVGTGPGLPGIPLAIVRPDAHFTLLDSLGKRVRFLRQVQHELGLNNIEPVQSRVEAFTSEPPFDGVISRAFASLQDMLSWCHHLPAKPEGRFYALKGVRPDDELAVLPEDIVLESVIKLDVPELDGERHLIILKSN</sequence>
<feature type="chain" id="PRO_1000010238" description="Ribosomal RNA small subunit methyltransferase G">
    <location>
        <begin position="1"/>
        <end position="206"/>
    </location>
</feature>
<feature type="binding site" evidence="1">
    <location>
        <position position="73"/>
    </location>
    <ligand>
        <name>S-adenosyl-L-methionine</name>
        <dbReference type="ChEBI" id="CHEBI:59789"/>
    </ligand>
</feature>
<feature type="binding site" evidence="1">
    <location>
        <position position="78"/>
    </location>
    <ligand>
        <name>S-adenosyl-L-methionine</name>
        <dbReference type="ChEBI" id="CHEBI:59789"/>
    </ligand>
</feature>
<feature type="binding site" evidence="1">
    <location>
        <begin position="124"/>
        <end position="125"/>
    </location>
    <ligand>
        <name>S-adenosyl-L-methionine</name>
        <dbReference type="ChEBI" id="CHEBI:59789"/>
    </ligand>
</feature>
<feature type="binding site" evidence="1">
    <location>
        <position position="139"/>
    </location>
    <ligand>
        <name>S-adenosyl-L-methionine</name>
        <dbReference type="ChEBI" id="CHEBI:59789"/>
    </ligand>
</feature>
<comment type="function">
    <text evidence="1">Specifically methylates the N7 position of guanine in position 527 of 16S rRNA.</text>
</comment>
<comment type="catalytic activity">
    <reaction evidence="1">
        <text>guanosine(527) in 16S rRNA + S-adenosyl-L-methionine = N(7)-methylguanosine(527) in 16S rRNA + S-adenosyl-L-homocysteine</text>
        <dbReference type="Rhea" id="RHEA:42732"/>
        <dbReference type="Rhea" id="RHEA-COMP:10209"/>
        <dbReference type="Rhea" id="RHEA-COMP:10210"/>
        <dbReference type="ChEBI" id="CHEBI:57856"/>
        <dbReference type="ChEBI" id="CHEBI:59789"/>
        <dbReference type="ChEBI" id="CHEBI:74269"/>
        <dbReference type="ChEBI" id="CHEBI:74480"/>
        <dbReference type="EC" id="2.1.1.170"/>
    </reaction>
</comment>
<comment type="subcellular location">
    <subcellularLocation>
        <location evidence="1">Cytoplasm</location>
    </subcellularLocation>
</comment>
<comment type="similarity">
    <text evidence="1">Belongs to the methyltransferase superfamily. RNA methyltransferase RsmG family.</text>
</comment>
<name>RSMG_YERPA</name>
<evidence type="ECO:0000255" key="1">
    <source>
        <dbReference type="HAMAP-Rule" id="MF_00074"/>
    </source>
</evidence>
<dbReference type="EC" id="2.1.1.170" evidence="1"/>
<dbReference type="EMBL" id="CP000308">
    <property type="protein sequence ID" value="ABG16135.1"/>
    <property type="molecule type" value="Genomic_DNA"/>
</dbReference>
<dbReference type="RefSeq" id="WP_002212261.1">
    <property type="nucleotide sequence ID" value="NZ_CP009906.1"/>
</dbReference>
<dbReference type="SMR" id="Q1C087"/>
<dbReference type="GeneID" id="57974595"/>
<dbReference type="KEGG" id="ypa:YPA_4174"/>
<dbReference type="Proteomes" id="UP000001971">
    <property type="component" value="Chromosome"/>
</dbReference>
<dbReference type="GO" id="GO:0005829">
    <property type="term" value="C:cytosol"/>
    <property type="evidence" value="ECO:0007669"/>
    <property type="project" value="TreeGrafter"/>
</dbReference>
<dbReference type="GO" id="GO:0070043">
    <property type="term" value="F:rRNA (guanine-N7-)-methyltransferase activity"/>
    <property type="evidence" value="ECO:0007669"/>
    <property type="project" value="UniProtKB-UniRule"/>
</dbReference>
<dbReference type="CDD" id="cd02440">
    <property type="entry name" value="AdoMet_MTases"/>
    <property type="match status" value="1"/>
</dbReference>
<dbReference type="FunFam" id="3.40.50.150:FF:000032">
    <property type="entry name" value="Ribosomal RNA small subunit methyltransferase G"/>
    <property type="match status" value="1"/>
</dbReference>
<dbReference type="Gene3D" id="3.40.50.150">
    <property type="entry name" value="Vaccinia Virus protein VP39"/>
    <property type="match status" value="1"/>
</dbReference>
<dbReference type="HAMAP" id="MF_00074">
    <property type="entry name" value="16SrRNA_methyltr_G"/>
    <property type="match status" value="1"/>
</dbReference>
<dbReference type="InterPro" id="IPR003682">
    <property type="entry name" value="rRNA_ssu_MeTfrase_G"/>
</dbReference>
<dbReference type="InterPro" id="IPR029063">
    <property type="entry name" value="SAM-dependent_MTases_sf"/>
</dbReference>
<dbReference type="NCBIfam" id="TIGR00138">
    <property type="entry name" value="rsmG_gidB"/>
    <property type="match status" value="1"/>
</dbReference>
<dbReference type="PANTHER" id="PTHR31760">
    <property type="entry name" value="S-ADENOSYL-L-METHIONINE-DEPENDENT METHYLTRANSFERASES SUPERFAMILY PROTEIN"/>
    <property type="match status" value="1"/>
</dbReference>
<dbReference type="PANTHER" id="PTHR31760:SF0">
    <property type="entry name" value="S-ADENOSYL-L-METHIONINE-DEPENDENT METHYLTRANSFERASES SUPERFAMILY PROTEIN"/>
    <property type="match status" value="1"/>
</dbReference>
<dbReference type="Pfam" id="PF02527">
    <property type="entry name" value="GidB"/>
    <property type="match status" value="1"/>
</dbReference>
<dbReference type="PIRSF" id="PIRSF003078">
    <property type="entry name" value="GidB"/>
    <property type="match status" value="1"/>
</dbReference>
<dbReference type="SUPFAM" id="SSF53335">
    <property type="entry name" value="S-adenosyl-L-methionine-dependent methyltransferases"/>
    <property type="match status" value="1"/>
</dbReference>
<gene>
    <name evidence="1" type="primary">rsmG</name>
    <name type="ordered locus">YPA_4174</name>
</gene>
<protein>
    <recommendedName>
        <fullName evidence="1">Ribosomal RNA small subunit methyltransferase G</fullName>
        <ecNumber evidence="1">2.1.1.170</ecNumber>
    </recommendedName>
    <alternativeName>
        <fullName evidence="1">16S rRNA 7-methylguanosine methyltransferase</fullName>
        <shortName evidence="1">16S rRNA m7G methyltransferase</shortName>
    </alternativeName>
</protein>
<keyword id="KW-0963">Cytoplasm</keyword>
<keyword id="KW-0489">Methyltransferase</keyword>
<keyword id="KW-0698">rRNA processing</keyword>
<keyword id="KW-0949">S-adenosyl-L-methionine</keyword>
<keyword id="KW-0808">Transferase</keyword>
<accession>Q1C087</accession>
<organism>
    <name type="scientific">Yersinia pestis bv. Antiqua (strain Antiqua)</name>
    <dbReference type="NCBI Taxonomy" id="360102"/>
    <lineage>
        <taxon>Bacteria</taxon>
        <taxon>Pseudomonadati</taxon>
        <taxon>Pseudomonadota</taxon>
        <taxon>Gammaproteobacteria</taxon>
        <taxon>Enterobacterales</taxon>
        <taxon>Yersiniaceae</taxon>
        <taxon>Yersinia</taxon>
    </lineage>
</organism>